<gene>
    <name evidence="1" type="primary">rnt</name>
    <name type="ordered locus">XC_2714</name>
</gene>
<accession>Q4UT60</accession>
<feature type="chain" id="PRO_1000011427" description="Ribonuclease T">
    <location>
        <begin position="1"/>
        <end position="216"/>
    </location>
</feature>
<feature type="domain" description="Exonuclease" evidence="1">
    <location>
        <begin position="28"/>
        <end position="202"/>
    </location>
</feature>
<feature type="active site" description="Proton donor/acceptor" evidence="1">
    <location>
        <position position="189"/>
    </location>
</feature>
<feature type="binding site" evidence="1">
    <location>
        <position position="31"/>
    </location>
    <ligand>
        <name>Mg(2+)</name>
        <dbReference type="ChEBI" id="CHEBI:18420"/>
        <label>1</label>
        <note>catalytic</note>
    </ligand>
</feature>
<feature type="binding site" evidence="1">
    <location>
        <position position="31"/>
    </location>
    <ligand>
        <name>Mg(2+)</name>
        <dbReference type="ChEBI" id="CHEBI:18420"/>
        <label>2</label>
        <note>catalytic</note>
    </ligand>
</feature>
<feature type="binding site" evidence="1">
    <location>
        <position position="33"/>
    </location>
    <ligand>
        <name>Mg(2+)</name>
        <dbReference type="ChEBI" id="CHEBI:18420"/>
        <label>2</label>
        <note>catalytic</note>
    </ligand>
</feature>
<feature type="binding site" evidence="1">
    <location>
        <position position="189"/>
    </location>
    <ligand>
        <name>Mg(2+)</name>
        <dbReference type="ChEBI" id="CHEBI:18420"/>
        <label>2</label>
        <note>catalytic</note>
    </ligand>
</feature>
<feature type="binding site" evidence="1">
    <location>
        <position position="194"/>
    </location>
    <ligand>
        <name>Mg(2+)</name>
        <dbReference type="ChEBI" id="CHEBI:18420"/>
        <label>2</label>
        <note>catalytic</note>
    </ligand>
</feature>
<feature type="site" description="Important for substrate binding and specificity" evidence="1">
    <location>
        <position position="37"/>
    </location>
</feature>
<feature type="site" description="Important for substrate binding and specificity" evidence="1">
    <location>
        <position position="132"/>
    </location>
</feature>
<feature type="site" description="Important for substrate binding and specificity" evidence="1">
    <location>
        <position position="154"/>
    </location>
</feature>
<sequence length="216" mass="23419">MPMNEPVDLQPSPSLLPMSRRFRGYLPVVVDVETGGFDWNKHALLEIACVPIEMDAQGHFFPGETASAHLVPAPGLEIDPKSLEITGIVLDHPFRFAKQEKDALDHVFAPVRAAVKKYGCQRAILVGHNAHFDLNFLNAAVARVGHKRNPFHPFSVFDTVTLAGVAYGQTVLARAAQAAGLDWNSADAHSAVYDTEQTARLFCKIANAWPGPASAG</sequence>
<organism>
    <name type="scientific">Xanthomonas campestris pv. campestris (strain 8004)</name>
    <dbReference type="NCBI Taxonomy" id="314565"/>
    <lineage>
        <taxon>Bacteria</taxon>
        <taxon>Pseudomonadati</taxon>
        <taxon>Pseudomonadota</taxon>
        <taxon>Gammaproteobacteria</taxon>
        <taxon>Lysobacterales</taxon>
        <taxon>Lysobacteraceae</taxon>
        <taxon>Xanthomonas</taxon>
    </lineage>
</organism>
<proteinExistence type="inferred from homology"/>
<evidence type="ECO:0000255" key="1">
    <source>
        <dbReference type="HAMAP-Rule" id="MF_00157"/>
    </source>
</evidence>
<dbReference type="EC" id="3.1.13.-" evidence="1"/>
<dbReference type="EMBL" id="CP000050">
    <property type="protein sequence ID" value="AAY49763.1"/>
    <property type="molecule type" value="Genomic_DNA"/>
</dbReference>
<dbReference type="RefSeq" id="WP_011036706.1">
    <property type="nucleotide sequence ID" value="NZ_CP155948.1"/>
</dbReference>
<dbReference type="SMR" id="Q4UT60"/>
<dbReference type="GeneID" id="58013888"/>
<dbReference type="KEGG" id="xcb:XC_2714"/>
<dbReference type="HOGENOM" id="CLU_082724_0_0_6"/>
<dbReference type="Proteomes" id="UP000000420">
    <property type="component" value="Chromosome"/>
</dbReference>
<dbReference type="GO" id="GO:0005829">
    <property type="term" value="C:cytosol"/>
    <property type="evidence" value="ECO:0007669"/>
    <property type="project" value="TreeGrafter"/>
</dbReference>
<dbReference type="GO" id="GO:0008408">
    <property type="term" value="F:3'-5' exonuclease activity"/>
    <property type="evidence" value="ECO:0007669"/>
    <property type="project" value="TreeGrafter"/>
</dbReference>
<dbReference type="GO" id="GO:0000287">
    <property type="term" value="F:magnesium ion binding"/>
    <property type="evidence" value="ECO:0007669"/>
    <property type="project" value="UniProtKB-UniRule"/>
</dbReference>
<dbReference type="GO" id="GO:0003676">
    <property type="term" value="F:nucleic acid binding"/>
    <property type="evidence" value="ECO:0007669"/>
    <property type="project" value="InterPro"/>
</dbReference>
<dbReference type="GO" id="GO:0016896">
    <property type="term" value="F:RNA exonuclease activity, producing 5'-phosphomonoesters"/>
    <property type="evidence" value="ECO:0007669"/>
    <property type="project" value="UniProtKB-UniRule"/>
</dbReference>
<dbReference type="GO" id="GO:0045004">
    <property type="term" value="P:DNA replication proofreading"/>
    <property type="evidence" value="ECO:0007669"/>
    <property type="project" value="TreeGrafter"/>
</dbReference>
<dbReference type="GO" id="GO:0008033">
    <property type="term" value="P:tRNA processing"/>
    <property type="evidence" value="ECO:0007669"/>
    <property type="project" value="UniProtKB-KW"/>
</dbReference>
<dbReference type="CDD" id="cd06134">
    <property type="entry name" value="RNaseT"/>
    <property type="match status" value="1"/>
</dbReference>
<dbReference type="FunFam" id="3.30.420.10:FF:000009">
    <property type="entry name" value="Ribonuclease T"/>
    <property type="match status" value="1"/>
</dbReference>
<dbReference type="Gene3D" id="3.30.420.10">
    <property type="entry name" value="Ribonuclease H-like superfamily/Ribonuclease H"/>
    <property type="match status" value="1"/>
</dbReference>
<dbReference type="HAMAP" id="MF_00157">
    <property type="entry name" value="RNase_T"/>
    <property type="match status" value="1"/>
</dbReference>
<dbReference type="InterPro" id="IPR013520">
    <property type="entry name" value="Exonuclease_RNaseT/DNA_pol3"/>
</dbReference>
<dbReference type="InterPro" id="IPR005987">
    <property type="entry name" value="RNase_T"/>
</dbReference>
<dbReference type="InterPro" id="IPR012337">
    <property type="entry name" value="RNaseH-like_sf"/>
</dbReference>
<dbReference type="InterPro" id="IPR036397">
    <property type="entry name" value="RNaseH_sf"/>
</dbReference>
<dbReference type="NCBIfam" id="TIGR01298">
    <property type="entry name" value="RNaseT"/>
    <property type="match status" value="1"/>
</dbReference>
<dbReference type="PANTHER" id="PTHR30231">
    <property type="entry name" value="DNA POLYMERASE III SUBUNIT EPSILON"/>
    <property type="match status" value="1"/>
</dbReference>
<dbReference type="PANTHER" id="PTHR30231:SF2">
    <property type="entry name" value="RIBONUCLEASE T"/>
    <property type="match status" value="1"/>
</dbReference>
<dbReference type="Pfam" id="PF00929">
    <property type="entry name" value="RNase_T"/>
    <property type="match status" value="1"/>
</dbReference>
<dbReference type="SMART" id="SM00479">
    <property type="entry name" value="EXOIII"/>
    <property type="match status" value="1"/>
</dbReference>
<dbReference type="SUPFAM" id="SSF53098">
    <property type="entry name" value="Ribonuclease H-like"/>
    <property type="match status" value="1"/>
</dbReference>
<comment type="function">
    <text evidence="1">Trims short 3' overhangs of a variety of RNA species, leaving a one or two nucleotide 3' overhang. Responsible for the end-turnover of tRNA: specifically removes the terminal AMP residue from uncharged tRNA (tRNA-C-C-A). Also appears to be involved in tRNA biosynthesis.</text>
</comment>
<comment type="cofactor">
    <cofactor evidence="1">
        <name>Mg(2+)</name>
        <dbReference type="ChEBI" id="CHEBI:18420"/>
    </cofactor>
    <text evidence="1">Binds two Mg(2+) per subunit. The active form of the enzyme binds two Mg(2+) ions in its active site. The first Mg(2+) forms only one salt bridge with the protein.</text>
</comment>
<comment type="subunit">
    <text evidence="1">Homodimer.</text>
</comment>
<comment type="similarity">
    <text evidence="1">Belongs to the RNase T family.</text>
</comment>
<reference key="1">
    <citation type="journal article" date="2005" name="Genome Res.">
        <title>Comparative and functional genomic analyses of the pathogenicity of phytopathogen Xanthomonas campestris pv. campestris.</title>
        <authorList>
            <person name="Qian W."/>
            <person name="Jia Y."/>
            <person name="Ren S.-X."/>
            <person name="He Y.-Q."/>
            <person name="Feng J.-X."/>
            <person name="Lu L.-F."/>
            <person name="Sun Q."/>
            <person name="Ying G."/>
            <person name="Tang D.-J."/>
            <person name="Tang H."/>
            <person name="Wu W."/>
            <person name="Hao P."/>
            <person name="Wang L."/>
            <person name="Jiang B.-L."/>
            <person name="Zeng S."/>
            <person name="Gu W.-Y."/>
            <person name="Lu G."/>
            <person name="Rong L."/>
            <person name="Tian Y."/>
            <person name="Yao Z."/>
            <person name="Fu G."/>
            <person name="Chen B."/>
            <person name="Fang R."/>
            <person name="Qiang B."/>
            <person name="Chen Z."/>
            <person name="Zhao G.-P."/>
            <person name="Tang J.-L."/>
            <person name="He C."/>
        </authorList>
    </citation>
    <scope>NUCLEOTIDE SEQUENCE [LARGE SCALE GENOMIC DNA]</scope>
    <source>
        <strain>8004</strain>
    </source>
</reference>
<keyword id="KW-0269">Exonuclease</keyword>
<keyword id="KW-0378">Hydrolase</keyword>
<keyword id="KW-0460">Magnesium</keyword>
<keyword id="KW-0479">Metal-binding</keyword>
<keyword id="KW-0540">Nuclease</keyword>
<keyword id="KW-0819">tRNA processing</keyword>
<name>RNT_XANC8</name>
<protein>
    <recommendedName>
        <fullName evidence="1">Ribonuclease T</fullName>
        <ecNumber evidence="1">3.1.13.-</ecNumber>
    </recommendedName>
    <alternativeName>
        <fullName evidence="1">Exoribonuclease T</fullName>
        <shortName evidence="1">RNase T</shortName>
    </alternativeName>
</protein>